<name>NADE_ENT38</name>
<sequence>MALQQEIIQALGVKPSIDANAEIRRSIDFLKSYLKTNSFLKTLVLGISGGQDSTLAGKLCQQAISELRQETGDESLQFIAVRLPYGVQADEQDCQDAIAFIHPDRVLTVNIKGSVLASEQALREAGLELSDFVRGNEKARERMKAQYSIAGMTKGVVVGTDHAAEAVTGFFTKYGDGGTDINPLFRLNKRQGKQLLAALGCPEHLYLKAPTADLEDDRPSLPDEAALGVTYENIDDYLEGKTLDDTIARTIEGWYLKTEHKRRPPITVFDDFWKR</sequence>
<proteinExistence type="inferred from homology"/>
<gene>
    <name evidence="1" type="primary">nadE</name>
    <name type="ordered locus">Ent638_1704</name>
</gene>
<evidence type="ECO:0000255" key="1">
    <source>
        <dbReference type="HAMAP-Rule" id="MF_00193"/>
    </source>
</evidence>
<comment type="function">
    <text evidence="1">Catalyzes the ATP-dependent amidation of deamido-NAD to form NAD. Uses ammonia as a nitrogen source.</text>
</comment>
<comment type="catalytic activity">
    <reaction evidence="1">
        <text>deamido-NAD(+) + NH4(+) + ATP = AMP + diphosphate + NAD(+) + H(+)</text>
        <dbReference type="Rhea" id="RHEA:21188"/>
        <dbReference type="ChEBI" id="CHEBI:15378"/>
        <dbReference type="ChEBI" id="CHEBI:28938"/>
        <dbReference type="ChEBI" id="CHEBI:30616"/>
        <dbReference type="ChEBI" id="CHEBI:33019"/>
        <dbReference type="ChEBI" id="CHEBI:57540"/>
        <dbReference type="ChEBI" id="CHEBI:58437"/>
        <dbReference type="ChEBI" id="CHEBI:456215"/>
        <dbReference type="EC" id="6.3.1.5"/>
    </reaction>
</comment>
<comment type="pathway">
    <text evidence="1">Cofactor biosynthesis; NAD(+) biosynthesis; NAD(+) from deamido-NAD(+) (ammonia route): step 1/1.</text>
</comment>
<comment type="subunit">
    <text evidence="1">Homodimer.</text>
</comment>
<comment type="similarity">
    <text evidence="1">Belongs to the NAD synthetase family.</text>
</comment>
<protein>
    <recommendedName>
        <fullName evidence="1">NH(3)-dependent NAD(+) synthetase</fullName>
        <ecNumber evidence="1">6.3.1.5</ecNumber>
    </recommendedName>
</protein>
<feature type="chain" id="PRO_1000077555" description="NH(3)-dependent NAD(+) synthetase">
    <location>
        <begin position="1"/>
        <end position="275"/>
    </location>
</feature>
<feature type="binding site" evidence="1">
    <location>
        <begin position="46"/>
        <end position="53"/>
    </location>
    <ligand>
        <name>ATP</name>
        <dbReference type="ChEBI" id="CHEBI:30616"/>
    </ligand>
</feature>
<feature type="binding site" evidence="1">
    <location>
        <position position="52"/>
    </location>
    <ligand>
        <name>Mg(2+)</name>
        <dbReference type="ChEBI" id="CHEBI:18420"/>
    </ligand>
</feature>
<feature type="binding site" evidence="1">
    <location>
        <position position="140"/>
    </location>
    <ligand>
        <name>deamido-NAD(+)</name>
        <dbReference type="ChEBI" id="CHEBI:58437"/>
    </ligand>
</feature>
<feature type="binding site" evidence="1">
    <location>
        <position position="160"/>
    </location>
    <ligand>
        <name>ATP</name>
        <dbReference type="ChEBI" id="CHEBI:30616"/>
    </ligand>
</feature>
<feature type="binding site" evidence="1">
    <location>
        <position position="165"/>
    </location>
    <ligand>
        <name>Mg(2+)</name>
        <dbReference type="ChEBI" id="CHEBI:18420"/>
    </ligand>
</feature>
<feature type="binding site" evidence="1">
    <location>
        <position position="173"/>
    </location>
    <ligand>
        <name>deamido-NAD(+)</name>
        <dbReference type="ChEBI" id="CHEBI:58437"/>
    </ligand>
</feature>
<feature type="binding site" evidence="1">
    <location>
        <position position="180"/>
    </location>
    <ligand>
        <name>deamido-NAD(+)</name>
        <dbReference type="ChEBI" id="CHEBI:58437"/>
    </ligand>
</feature>
<feature type="binding site" evidence="1">
    <location>
        <position position="189"/>
    </location>
    <ligand>
        <name>ATP</name>
        <dbReference type="ChEBI" id="CHEBI:30616"/>
    </ligand>
</feature>
<feature type="binding site" evidence="1">
    <location>
        <position position="211"/>
    </location>
    <ligand>
        <name>ATP</name>
        <dbReference type="ChEBI" id="CHEBI:30616"/>
    </ligand>
</feature>
<feature type="binding site" evidence="1">
    <location>
        <begin position="260"/>
        <end position="261"/>
    </location>
    <ligand>
        <name>deamido-NAD(+)</name>
        <dbReference type="ChEBI" id="CHEBI:58437"/>
    </ligand>
</feature>
<reference key="1">
    <citation type="journal article" date="2010" name="PLoS Genet.">
        <title>Genome sequence of the plant growth promoting endophytic bacterium Enterobacter sp. 638.</title>
        <authorList>
            <person name="Taghavi S."/>
            <person name="van der Lelie D."/>
            <person name="Hoffman A."/>
            <person name="Zhang Y.B."/>
            <person name="Walla M.D."/>
            <person name="Vangronsveld J."/>
            <person name="Newman L."/>
            <person name="Monchy S."/>
        </authorList>
    </citation>
    <scope>NUCLEOTIDE SEQUENCE [LARGE SCALE GENOMIC DNA]</scope>
    <source>
        <strain>638</strain>
    </source>
</reference>
<dbReference type="EC" id="6.3.1.5" evidence="1"/>
<dbReference type="EMBL" id="CP000653">
    <property type="protein sequence ID" value="ABP60383.1"/>
    <property type="molecule type" value="Genomic_DNA"/>
</dbReference>
<dbReference type="RefSeq" id="WP_012017099.1">
    <property type="nucleotide sequence ID" value="NC_009436.1"/>
</dbReference>
<dbReference type="SMR" id="A4W9K3"/>
<dbReference type="STRING" id="399742.Ent638_1704"/>
<dbReference type="KEGG" id="ent:Ent638_1704"/>
<dbReference type="eggNOG" id="COG0171">
    <property type="taxonomic scope" value="Bacteria"/>
</dbReference>
<dbReference type="HOGENOM" id="CLU_059327_3_0_6"/>
<dbReference type="OrthoDB" id="3266517at2"/>
<dbReference type="UniPathway" id="UPA00253">
    <property type="reaction ID" value="UER00333"/>
</dbReference>
<dbReference type="Proteomes" id="UP000000230">
    <property type="component" value="Chromosome"/>
</dbReference>
<dbReference type="GO" id="GO:0005737">
    <property type="term" value="C:cytoplasm"/>
    <property type="evidence" value="ECO:0007669"/>
    <property type="project" value="InterPro"/>
</dbReference>
<dbReference type="GO" id="GO:0005524">
    <property type="term" value="F:ATP binding"/>
    <property type="evidence" value="ECO:0007669"/>
    <property type="project" value="UniProtKB-UniRule"/>
</dbReference>
<dbReference type="GO" id="GO:0004359">
    <property type="term" value="F:glutaminase activity"/>
    <property type="evidence" value="ECO:0007669"/>
    <property type="project" value="InterPro"/>
</dbReference>
<dbReference type="GO" id="GO:0046872">
    <property type="term" value="F:metal ion binding"/>
    <property type="evidence" value="ECO:0007669"/>
    <property type="project" value="UniProtKB-KW"/>
</dbReference>
<dbReference type="GO" id="GO:0003952">
    <property type="term" value="F:NAD+ synthase (glutamine-hydrolyzing) activity"/>
    <property type="evidence" value="ECO:0007669"/>
    <property type="project" value="InterPro"/>
</dbReference>
<dbReference type="GO" id="GO:0008795">
    <property type="term" value="F:NAD+ synthase activity"/>
    <property type="evidence" value="ECO:0007669"/>
    <property type="project" value="UniProtKB-UniRule"/>
</dbReference>
<dbReference type="GO" id="GO:0009435">
    <property type="term" value="P:NAD biosynthetic process"/>
    <property type="evidence" value="ECO:0007669"/>
    <property type="project" value="UniProtKB-UniRule"/>
</dbReference>
<dbReference type="CDD" id="cd00553">
    <property type="entry name" value="NAD_synthase"/>
    <property type="match status" value="1"/>
</dbReference>
<dbReference type="FunFam" id="3.40.50.620:FF:000015">
    <property type="entry name" value="NH(3)-dependent NAD(+) synthetase"/>
    <property type="match status" value="1"/>
</dbReference>
<dbReference type="Gene3D" id="3.40.50.620">
    <property type="entry name" value="HUPs"/>
    <property type="match status" value="1"/>
</dbReference>
<dbReference type="HAMAP" id="MF_00193">
    <property type="entry name" value="NadE_ammonia_dep"/>
    <property type="match status" value="1"/>
</dbReference>
<dbReference type="InterPro" id="IPR022310">
    <property type="entry name" value="NAD/GMP_synthase"/>
</dbReference>
<dbReference type="InterPro" id="IPR003694">
    <property type="entry name" value="NAD_synthase"/>
</dbReference>
<dbReference type="InterPro" id="IPR022926">
    <property type="entry name" value="NH(3)-dep_NAD(+)_synth"/>
</dbReference>
<dbReference type="InterPro" id="IPR014729">
    <property type="entry name" value="Rossmann-like_a/b/a_fold"/>
</dbReference>
<dbReference type="NCBIfam" id="TIGR00552">
    <property type="entry name" value="nadE"/>
    <property type="match status" value="1"/>
</dbReference>
<dbReference type="NCBIfam" id="NF001979">
    <property type="entry name" value="PRK00768.1"/>
    <property type="match status" value="1"/>
</dbReference>
<dbReference type="PANTHER" id="PTHR23090">
    <property type="entry name" value="NH 3 /GLUTAMINE-DEPENDENT NAD + SYNTHETASE"/>
    <property type="match status" value="1"/>
</dbReference>
<dbReference type="PANTHER" id="PTHR23090:SF7">
    <property type="entry name" value="NH(3)-DEPENDENT NAD(+) SYNTHETASE"/>
    <property type="match status" value="1"/>
</dbReference>
<dbReference type="Pfam" id="PF02540">
    <property type="entry name" value="NAD_synthase"/>
    <property type="match status" value="1"/>
</dbReference>
<dbReference type="SUPFAM" id="SSF52402">
    <property type="entry name" value="Adenine nucleotide alpha hydrolases-like"/>
    <property type="match status" value="1"/>
</dbReference>
<organism>
    <name type="scientific">Enterobacter sp. (strain 638)</name>
    <dbReference type="NCBI Taxonomy" id="399742"/>
    <lineage>
        <taxon>Bacteria</taxon>
        <taxon>Pseudomonadati</taxon>
        <taxon>Pseudomonadota</taxon>
        <taxon>Gammaproteobacteria</taxon>
        <taxon>Enterobacterales</taxon>
        <taxon>Enterobacteriaceae</taxon>
        <taxon>Enterobacter</taxon>
    </lineage>
</organism>
<accession>A4W9K3</accession>
<keyword id="KW-0067">ATP-binding</keyword>
<keyword id="KW-0436">Ligase</keyword>
<keyword id="KW-0460">Magnesium</keyword>
<keyword id="KW-0479">Metal-binding</keyword>
<keyword id="KW-0520">NAD</keyword>
<keyword id="KW-0547">Nucleotide-binding</keyword>